<keyword id="KW-0002">3D-structure</keyword>
<keyword id="KW-0010">Activator</keyword>
<keyword id="KW-0238">DNA-binding</keyword>
<keyword id="KW-0244">Early protein</keyword>
<keyword id="KW-1035">Host cytoplasm</keyword>
<keyword id="KW-1048">Host nucleus</keyword>
<keyword id="KW-0945">Host-virus interaction</keyword>
<keyword id="KW-1090">Inhibition of host innate immune response by virus</keyword>
<keyword id="KW-0479">Metal-binding</keyword>
<keyword id="KW-1119">Modulation of host cell apoptosis by virus</keyword>
<keyword id="KW-1185">Reference proteome</keyword>
<keyword id="KW-0804">Transcription</keyword>
<keyword id="KW-0805">Transcription regulation</keyword>
<keyword id="KW-0899">Viral immunoevasion</keyword>
<keyword id="KW-0862">Zinc</keyword>
<keyword id="KW-0863">Zinc-finger</keyword>
<protein>
    <recommendedName>
        <fullName evidence="1">Protein E6</fullName>
    </recommendedName>
</protein>
<proteinExistence type="evidence at protein level"/>
<organismHost>
    <name type="scientific">Bos taurus</name>
    <name type="common">Bovine</name>
    <dbReference type="NCBI Taxonomy" id="9913"/>
</organismHost>
<organism>
    <name type="scientific">Bovine papillomavirus type 1</name>
    <dbReference type="NCBI Taxonomy" id="337052"/>
    <lineage>
        <taxon>Viruses</taxon>
        <taxon>Monodnaviria</taxon>
        <taxon>Shotokuvirae</taxon>
        <taxon>Cossaviricota</taxon>
        <taxon>Papovaviricetes</taxon>
        <taxon>Zurhausenvirales</taxon>
        <taxon>Papillomaviridae</taxon>
        <taxon>Firstpapillomavirinae</taxon>
        <taxon>Deltapapillomavirus</taxon>
    </lineage>
</organism>
<gene>
    <name evidence="1" type="primary">E6</name>
</gene>
<name>VE6_BPV1</name>
<feature type="chain" id="PRO_0000133315" description="Protein E6">
    <location>
        <begin position="1"/>
        <end position="137"/>
    </location>
</feature>
<feature type="zinc finger region" evidence="1">
    <location>
        <begin position="17"/>
        <end position="53"/>
    </location>
</feature>
<feature type="zinc finger region" evidence="1">
    <location>
        <begin position="90"/>
        <end position="127"/>
    </location>
</feature>
<feature type="turn" evidence="4">
    <location>
        <begin position="18"/>
        <end position="20"/>
    </location>
</feature>
<feature type="helix" evidence="4">
    <location>
        <begin position="26"/>
        <end position="34"/>
    </location>
</feature>
<feature type="strand" evidence="4">
    <location>
        <begin position="40"/>
        <end position="42"/>
    </location>
</feature>
<feature type="strand" evidence="4">
    <location>
        <begin position="45"/>
        <end position="48"/>
    </location>
</feature>
<feature type="helix" evidence="4">
    <location>
        <begin position="51"/>
        <end position="64"/>
    </location>
</feature>
<feature type="strand" evidence="4">
    <location>
        <begin position="68"/>
        <end position="70"/>
    </location>
</feature>
<feature type="helix" evidence="4">
    <location>
        <begin position="72"/>
        <end position="78"/>
    </location>
</feature>
<feature type="helix" evidence="4">
    <location>
        <begin position="83"/>
        <end position="85"/>
    </location>
</feature>
<feature type="turn" evidence="4">
    <location>
        <begin position="91"/>
        <end position="93"/>
    </location>
</feature>
<feature type="helix" evidence="4">
    <location>
        <begin position="99"/>
        <end position="107"/>
    </location>
</feature>
<feature type="strand" evidence="4">
    <location>
        <begin position="112"/>
        <end position="114"/>
    </location>
</feature>
<feature type="helix" evidence="4">
    <location>
        <begin position="116"/>
        <end position="118"/>
    </location>
</feature>
<feature type="strand" evidence="4">
    <location>
        <begin position="120"/>
        <end position="122"/>
    </location>
</feature>
<feature type="helix" evidence="4">
    <location>
        <begin position="125"/>
        <end position="127"/>
    </location>
</feature>
<evidence type="ECO:0000255" key="1">
    <source>
        <dbReference type="HAMAP-Rule" id="MF_04006"/>
    </source>
</evidence>
<evidence type="ECO:0000269" key="2">
    <source>
    </source>
</evidence>
<evidence type="ECO:0000305" key="3"/>
<evidence type="ECO:0007829" key="4">
    <source>
        <dbReference type="PDB" id="3PY7"/>
    </source>
</evidence>
<sequence length="137" mass="15850">MDLKPFARTNPFSGLDCLWCREPLTEVDAFRCMVKDFHVVIREGCRYGACTICLENCLATERRLWQGVPVTGEEAELLHGKTLDRLCIRCCYCGGKLTKNEKHRHVLFNEPFCKTRANIIRGRCYDCCRHGSRSKYP</sequence>
<accession>P06931</accession>
<dbReference type="EMBL" id="X02346">
    <property type="protein sequence ID" value="CAB46509.1"/>
    <property type="molecule type" value="Genomic_DNA"/>
</dbReference>
<dbReference type="PIR" id="C18151">
    <property type="entry name" value="W6WLEB"/>
</dbReference>
<dbReference type="RefSeq" id="NP_056737.1">
    <property type="nucleotide sequence ID" value="NC_001522.1"/>
</dbReference>
<dbReference type="PDB" id="3PY7">
    <property type="method" value="X-ray"/>
    <property type="resolution" value="2.29 A"/>
    <property type="chains" value="A=1-137"/>
</dbReference>
<dbReference type="PDBsum" id="3PY7"/>
<dbReference type="SMR" id="P06931"/>
<dbReference type="DIP" id="DIP-41442N"/>
<dbReference type="IntAct" id="P06931">
    <property type="interactions" value="7"/>
</dbReference>
<dbReference type="MINT" id="P06931"/>
<dbReference type="GeneID" id="1489017"/>
<dbReference type="KEGG" id="vg:1489017"/>
<dbReference type="OrthoDB" id="27353at10239"/>
<dbReference type="EvolutionaryTrace" id="P06931"/>
<dbReference type="Proteomes" id="UP000006567">
    <property type="component" value="Genome"/>
</dbReference>
<dbReference type="GO" id="GO:0030430">
    <property type="term" value="C:host cell cytoplasm"/>
    <property type="evidence" value="ECO:0007669"/>
    <property type="project" value="UniProtKB-SubCell"/>
</dbReference>
<dbReference type="GO" id="GO:0042025">
    <property type="term" value="C:host cell nucleus"/>
    <property type="evidence" value="ECO:0007669"/>
    <property type="project" value="UniProtKB-SubCell"/>
</dbReference>
<dbReference type="GO" id="GO:0003677">
    <property type="term" value="F:DNA binding"/>
    <property type="evidence" value="ECO:0007669"/>
    <property type="project" value="UniProtKB-UniRule"/>
</dbReference>
<dbReference type="GO" id="GO:0008270">
    <property type="term" value="F:zinc ion binding"/>
    <property type="evidence" value="ECO:0000314"/>
    <property type="project" value="BHF-UCL"/>
</dbReference>
<dbReference type="GO" id="GO:0006351">
    <property type="term" value="P:DNA-templated transcription"/>
    <property type="evidence" value="ECO:0007669"/>
    <property type="project" value="UniProtKB-UniRule"/>
</dbReference>
<dbReference type="GO" id="GO:0006355">
    <property type="term" value="P:regulation of DNA-templated transcription"/>
    <property type="evidence" value="ECO:0007669"/>
    <property type="project" value="UniProtKB-UniRule"/>
</dbReference>
<dbReference type="GO" id="GO:0052150">
    <property type="term" value="P:symbiont-mediated perturbation of host apoptosis"/>
    <property type="evidence" value="ECO:0007669"/>
    <property type="project" value="UniProtKB-KW"/>
</dbReference>
<dbReference type="GO" id="GO:0039648">
    <property type="term" value="P:symbiont-mediated perturbation of host ubiquitin-like protein modification"/>
    <property type="evidence" value="ECO:0007669"/>
    <property type="project" value="UniProtKB-UniRule"/>
</dbReference>
<dbReference type="GO" id="GO:0052170">
    <property type="term" value="P:symbiont-mediated suppression of host innate immune response"/>
    <property type="evidence" value="ECO:0007669"/>
    <property type="project" value="UniProtKB-KW"/>
</dbReference>
<dbReference type="GO" id="GO:0039502">
    <property type="term" value="P:symbiont-mediated suppression of host type I interferon-mediated signaling pathway"/>
    <property type="evidence" value="ECO:0007669"/>
    <property type="project" value="UniProtKB-UniRule"/>
</dbReference>
<dbReference type="Gene3D" id="3.30.240.40">
    <property type="entry name" value="E6 early regulatory protein"/>
    <property type="match status" value="2"/>
</dbReference>
<dbReference type="HAMAP" id="MF_04006">
    <property type="entry name" value="HPV_E6"/>
    <property type="match status" value="1"/>
</dbReference>
<dbReference type="InterPro" id="IPR001334">
    <property type="entry name" value="E6"/>
</dbReference>
<dbReference type="InterPro" id="IPR038575">
    <property type="entry name" value="E6_sf"/>
</dbReference>
<dbReference type="Pfam" id="PF00518">
    <property type="entry name" value="E6"/>
    <property type="match status" value="1"/>
</dbReference>
<dbReference type="SUPFAM" id="SSF161229">
    <property type="entry name" value="E6 C-terminal domain-like"/>
    <property type="match status" value="2"/>
</dbReference>
<comment type="function">
    <text evidence="1">Plays a major role in the induction and maintenance of cellular transformation. E6 associates with host UBE3A/E6-AP ubiquitin-protein ligase and modulates its activity. Protects host keratinocytes from apoptosis by mediating the degradation of host BAK1. May also inhibit host immune response.</text>
</comment>
<comment type="subunit">
    <text evidence="1 2">Forms homodimers. Interacts with ubiquitin-protein ligase UBE3A/E6-AP; this interaction stimulates UBE3A ubiquitin activity. Interacts with host BAK1. Interacts with human FBLN1.</text>
</comment>
<comment type="interaction">
    <interactant intactId="EBI-7281937">
        <id>P06931</id>
    </interactant>
    <interactant intactId="EBI-702209">
        <id>P49023</id>
        <label>PXN</label>
    </interactant>
    <organismsDiffer>true</organismsDiffer>
    <experiments>3</experiments>
</comment>
<comment type="interaction">
    <interactant intactId="EBI-7281937">
        <id>P06931</id>
    </interactant>
    <interactant intactId="EBI-2896280">
        <id>P49024</id>
        <label>PXN</label>
    </interactant>
    <organismsDiffer>true</organismsDiffer>
    <experiments>5</experiments>
</comment>
<comment type="interaction">
    <interactant intactId="EBI-7281937">
        <id>P06931</id>
    </interactant>
    <interactant intactId="EBI-954357">
        <id>Q05086</id>
        <label>UBE3A</label>
    </interactant>
    <organismsDiffer>true</organismsDiffer>
    <experiments>2</experiments>
</comment>
<comment type="subcellular location">
    <subcellularLocation>
        <location evidence="1">Host cytoplasm</location>
    </subcellularLocation>
    <subcellularLocation>
        <location evidence="1">Host nucleus</location>
    </subcellularLocation>
</comment>
<comment type="similarity">
    <text evidence="1 3">Belongs to the papillomaviridae E6 protein family.</text>
</comment>
<reference key="1">
    <citation type="journal article" date="1982" name="Nature">
        <title>The primary structure and genetic organization of the bovine papillomavirus type 1 genome.</title>
        <authorList>
            <person name="Chen E.Y."/>
            <person name="Howley P.M."/>
            <person name="Levinson A.D."/>
            <person name="Seeburg P.H."/>
        </authorList>
    </citation>
    <scope>NUCLEOTIDE SEQUENCE [GENOMIC DNA]</scope>
</reference>
<reference key="2">
    <citation type="journal article" date="1983" name="J. Virol.">
        <title>Comparative analysis of the human type 1a and bovine type 1 papillomavirus genomes.</title>
        <authorList>
            <person name="Danos O."/>
            <person name="Engel L.W."/>
            <person name="Chen E.Y."/>
            <person name="Yaniv M."/>
            <person name="Howley P.M."/>
        </authorList>
    </citation>
    <scope>COMPARATIVE ANALYSIS OF HUMAN TYPE 1A AND BOVINE TYPE 1 GENOMES</scope>
</reference>
<reference key="3">
    <citation type="journal article" date="1985" name="Science">
        <title>Identification of the protein encoded by the E6 transforming gene of bovine papillomavirus.</title>
        <authorList>
            <person name="Androphy E.J."/>
            <person name="Schiller J.T."/>
            <person name="Lowy D.R."/>
        </authorList>
    </citation>
    <scope>IDENTIFICATION OF PROTEIN</scope>
</reference>
<reference key="4">
    <citation type="journal article" date="2002" name="Biochem. Biophys. Res. Commun.">
        <title>Interaction of oncogenic papillomavirus E6 proteins with fibulin-1.</title>
        <authorList>
            <person name="Du M."/>
            <person name="Fan X."/>
            <person name="Hong E."/>
            <person name="Chen J.J."/>
        </authorList>
    </citation>
    <scope>INTERACTION WITH HUMAN FBLN1</scope>
    <scope>INHIBITION OF E6-MEDIATED TRANSFORMATION</scope>
</reference>